<organism>
    <name type="scientific">Pyrobaculum neutrophilum (strain DSM 2338 / JCM 9278 / NBRC 100436 / V24Sta)</name>
    <name type="common">Thermoproteus neutrophilus</name>
    <dbReference type="NCBI Taxonomy" id="444157"/>
    <lineage>
        <taxon>Archaea</taxon>
        <taxon>Thermoproteota</taxon>
        <taxon>Thermoprotei</taxon>
        <taxon>Thermoproteales</taxon>
        <taxon>Thermoproteaceae</taxon>
        <taxon>Pyrobaculum</taxon>
    </lineage>
</organism>
<comment type="function">
    <text evidence="1">Molecular chaperone capable of stabilizing a range of proteins. Seems to fulfill an ATP-independent, HSP70-like function in archaeal de novo protein folding.</text>
</comment>
<comment type="subunit">
    <text evidence="1">Heterohexamer of two alpha and four beta subunits.</text>
</comment>
<comment type="subcellular location">
    <subcellularLocation>
        <location evidence="1">Cytoplasm</location>
    </subcellularLocation>
</comment>
<comment type="similarity">
    <text evidence="1">Belongs to the prefoldin subunit beta family.</text>
</comment>
<feature type="chain" id="PRO_1000115624" description="Prefoldin subunit beta">
    <location>
        <begin position="1"/>
        <end position="126"/>
    </location>
</feature>
<name>PFDB_PYRNV</name>
<accession>B1Y973</accession>
<proteinExistence type="inferred from homology"/>
<dbReference type="EMBL" id="CP001014">
    <property type="protein sequence ID" value="ACB40302.1"/>
    <property type="molecule type" value="Genomic_DNA"/>
</dbReference>
<dbReference type="RefSeq" id="WP_012350721.1">
    <property type="nucleotide sequence ID" value="NC_010525.1"/>
</dbReference>
<dbReference type="SMR" id="B1Y973"/>
<dbReference type="STRING" id="444157.Tneu_1376"/>
<dbReference type="GeneID" id="6164750"/>
<dbReference type="KEGG" id="tne:Tneu_1376"/>
<dbReference type="eggNOG" id="arCOG01342">
    <property type="taxonomic scope" value="Archaea"/>
</dbReference>
<dbReference type="HOGENOM" id="CLU_131909_2_1_2"/>
<dbReference type="OrthoDB" id="27242at2157"/>
<dbReference type="Proteomes" id="UP000001694">
    <property type="component" value="Chromosome"/>
</dbReference>
<dbReference type="GO" id="GO:0005737">
    <property type="term" value="C:cytoplasm"/>
    <property type="evidence" value="ECO:0007669"/>
    <property type="project" value="UniProtKB-SubCell"/>
</dbReference>
<dbReference type="GO" id="GO:0016272">
    <property type="term" value="C:prefoldin complex"/>
    <property type="evidence" value="ECO:0007669"/>
    <property type="project" value="UniProtKB-UniRule"/>
</dbReference>
<dbReference type="GO" id="GO:0051087">
    <property type="term" value="F:protein-folding chaperone binding"/>
    <property type="evidence" value="ECO:0007669"/>
    <property type="project" value="TreeGrafter"/>
</dbReference>
<dbReference type="GO" id="GO:0051082">
    <property type="term" value="F:unfolded protein binding"/>
    <property type="evidence" value="ECO:0007669"/>
    <property type="project" value="UniProtKB-UniRule"/>
</dbReference>
<dbReference type="GO" id="GO:0051131">
    <property type="term" value="P:chaperone-mediated protein complex assembly"/>
    <property type="evidence" value="ECO:0007669"/>
    <property type="project" value="TreeGrafter"/>
</dbReference>
<dbReference type="GO" id="GO:0006457">
    <property type="term" value="P:protein folding"/>
    <property type="evidence" value="ECO:0007669"/>
    <property type="project" value="UniProtKB-UniRule"/>
</dbReference>
<dbReference type="CDD" id="cd23162">
    <property type="entry name" value="Prefoldin_beta_GimC"/>
    <property type="match status" value="1"/>
</dbReference>
<dbReference type="FunFam" id="1.10.287.370:FF:000013">
    <property type="entry name" value="Prefoldin subunit beta"/>
    <property type="match status" value="1"/>
</dbReference>
<dbReference type="Gene3D" id="1.10.287.370">
    <property type="match status" value="1"/>
</dbReference>
<dbReference type="HAMAP" id="MF_00307">
    <property type="entry name" value="PfdB"/>
    <property type="match status" value="1"/>
</dbReference>
<dbReference type="InterPro" id="IPR002777">
    <property type="entry name" value="PFD_beta-like"/>
</dbReference>
<dbReference type="InterPro" id="IPR012713">
    <property type="entry name" value="PfdB"/>
</dbReference>
<dbReference type="InterPro" id="IPR009053">
    <property type="entry name" value="Prefoldin"/>
</dbReference>
<dbReference type="NCBIfam" id="TIGR02338">
    <property type="entry name" value="gimC_beta"/>
    <property type="match status" value="1"/>
</dbReference>
<dbReference type="PANTHER" id="PTHR21431">
    <property type="entry name" value="PREFOLDIN SUBUNIT 6"/>
    <property type="match status" value="1"/>
</dbReference>
<dbReference type="PANTHER" id="PTHR21431:SF0">
    <property type="entry name" value="PREFOLDIN SUBUNIT 6"/>
    <property type="match status" value="1"/>
</dbReference>
<dbReference type="Pfam" id="PF01920">
    <property type="entry name" value="Prefoldin_2"/>
    <property type="match status" value="1"/>
</dbReference>
<dbReference type="SUPFAM" id="SSF46579">
    <property type="entry name" value="Prefoldin"/>
    <property type="match status" value="1"/>
</dbReference>
<sequence length="126" mass="14307">MAQIPPSLQDLVNRFNQAQAQLQSVLLRKQQYEAELKEVEKALAEIEKLPQDAKIYKSVGNFLIPQTKDAALQELKERKELLELHAKTLTRQESMLREQIDKLRDEINKELGKLRGGAQEAAKGGS</sequence>
<keyword id="KW-0143">Chaperone</keyword>
<keyword id="KW-0963">Cytoplasm</keyword>
<reference key="1">
    <citation type="submission" date="2008-03" db="EMBL/GenBank/DDBJ databases">
        <title>Complete sequence of Thermoproteus neutrophilus V24Sta.</title>
        <authorList>
            <consortium name="US DOE Joint Genome Institute"/>
            <person name="Copeland A."/>
            <person name="Lucas S."/>
            <person name="Lapidus A."/>
            <person name="Glavina del Rio T."/>
            <person name="Dalin E."/>
            <person name="Tice H."/>
            <person name="Bruce D."/>
            <person name="Goodwin L."/>
            <person name="Pitluck S."/>
            <person name="Sims D."/>
            <person name="Brettin T."/>
            <person name="Detter J.C."/>
            <person name="Han C."/>
            <person name="Kuske C.R."/>
            <person name="Schmutz J."/>
            <person name="Larimer F."/>
            <person name="Land M."/>
            <person name="Hauser L."/>
            <person name="Kyrpides N."/>
            <person name="Mikhailova N."/>
            <person name="Biddle J.F."/>
            <person name="Zhang Z."/>
            <person name="Fitz-Gibbon S.T."/>
            <person name="Lowe T.M."/>
            <person name="Saltikov C."/>
            <person name="House C.H."/>
            <person name="Richardson P."/>
        </authorList>
    </citation>
    <scope>NUCLEOTIDE SEQUENCE [LARGE SCALE GENOMIC DNA]</scope>
    <source>
        <strain>DSM 2338 / JCM 9278 / NBRC 100436 / V24Sta</strain>
    </source>
</reference>
<evidence type="ECO:0000255" key="1">
    <source>
        <dbReference type="HAMAP-Rule" id="MF_00307"/>
    </source>
</evidence>
<gene>
    <name evidence="1" type="primary">pfdB</name>
    <name type="ordered locus">Tneu_1376</name>
</gene>
<protein>
    <recommendedName>
        <fullName evidence="1">Prefoldin subunit beta</fullName>
    </recommendedName>
    <alternativeName>
        <fullName evidence="1">GimC subunit beta</fullName>
    </alternativeName>
</protein>